<proteinExistence type="evidence at transcript level"/>
<protein>
    <recommendedName>
        <fullName evidence="6">Norsolorinic acid reductase A</fullName>
        <ecNumber evidence="10">1.1.1.-</ecNumber>
    </recommendedName>
    <alternativeName>
        <fullName evidence="5">Aflatoxin biosynthesis protein E</fullName>
    </alternativeName>
</protein>
<gene>
    <name evidence="5" type="primary">aflE</name>
    <name evidence="6" type="synonym">norA</name>
    <name type="ORF">P875_00052990</name>
</gene>
<dbReference type="EC" id="1.1.1.-" evidence="10"/>
<dbReference type="EMBL" id="U24698">
    <property type="protein sequence ID" value="AAC49166.1"/>
    <property type="molecule type" value="Genomic_DNA"/>
</dbReference>
<dbReference type="EMBL" id="AY371490">
    <property type="protein sequence ID" value="AAS66006.1"/>
    <property type="molecule type" value="Genomic_DNA"/>
</dbReference>
<dbReference type="EMBL" id="JZEE01000729">
    <property type="protein sequence ID" value="KJK60773.1"/>
    <property type="status" value="ALT_SEQ"/>
    <property type="molecule type" value="Genomic_DNA"/>
</dbReference>
<dbReference type="SMR" id="Q00258"/>
<dbReference type="STRING" id="1403190.Q00258"/>
<dbReference type="OrthoDB" id="48988at2759"/>
<dbReference type="UniPathway" id="UPA00287"/>
<dbReference type="Proteomes" id="UP000033540">
    <property type="component" value="Unassembled WGS sequence"/>
</dbReference>
<dbReference type="GO" id="GO:0016491">
    <property type="term" value="F:oxidoreductase activity"/>
    <property type="evidence" value="ECO:0007669"/>
    <property type="project" value="UniProtKB-KW"/>
</dbReference>
<dbReference type="GO" id="GO:0045122">
    <property type="term" value="P:aflatoxin biosynthetic process"/>
    <property type="evidence" value="ECO:0000304"/>
    <property type="project" value="GO_Central"/>
</dbReference>
<dbReference type="CDD" id="cd19146">
    <property type="entry name" value="AKR_AKR9A1-2"/>
    <property type="match status" value="1"/>
</dbReference>
<dbReference type="FunFam" id="3.20.20.100:FF:000086">
    <property type="entry name" value="Putative sterigmatocystin biosynthesis dehydrogenase stcV"/>
    <property type="match status" value="1"/>
</dbReference>
<dbReference type="Gene3D" id="3.20.20.100">
    <property type="entry name" value="NADP-dependent oxidoreductase domain"/>
    <property type="match status" value="1"/>
</dbReference>
<dbReference type="InterPro" id="IPR050523">
    <property type="entry name" value="AKR_Detox_Biosynth"/>
</dbReference>
<dbReference type="InterPro" id="IPR023210">
    <property type="entry name" value="NADP_OxRdtase_dom"/>
</dbReference>
<dbReference type="InterPro" id="IPR036812">
    <property type="entry name" value="NADP_OxRdtase_dom_sf"/>
</dbReference>
<dbReference type="PANTHER" id="PTHR43364">
    <property type="entry name" value="NADH-SPECIFIC METHYLGLYOXAL REDUCTASE-RELATED"/>
    <property type="match status" value="1"/>
</dbReference>
<dbReference type="PANTHER" id="PTHR43364:SF7">
    <property type="entry name" value="NADP-DEPENDENT OXIDOREDUCTASE DOMAIN-CONTAINING PROTEIN-RELATED"/>
    <property type="match status" value="1"/>
</dbReference>
<dbReference type="Pfam" id="PF00248">
    <property type="entry name" value="Aldo_ket_red"/>
    <property type="match status" value="1"/>
</dbReference>
<dbReference type="SUPFAM" id="SSF51430">
    <property type="entry name" value="NAD(P)-linked oxidoreductase"/>
    <property type="match status" value="1"/>
</dbReference>
<accession>Q00258</accession>
<accession>A0A0F0I463</accession>
<accession>Q6UEG4</accession>
<comment type="function">
    <text evidence="4 8 9">Norsolorinic acid reductase; part of the gene cluster that mediates the biosynthesis of aflatoxins, a group of polyketide-derived furanocoumarins, and part of the most toxic and carcinogenic compounds among the known mycotoxins (PubMed:15006741, PubMed:15094053, PubMed:8593042). The four major aflatoxins produced by A.parasiticus are aflatoxin B1 (AFB1), aflatoxin B2 (AFB2), aflatoxin G1 (AFG1) and aflatoxin G2 (AFG2) (PubMed:15006741). Within the aflatoxin pathway, the norsolorinic acid reductase aflE may play a role in the conversion of norsolorinic acid (NOR) to averantin (AVN) (PubMed:15006741, PubMed:8593042). The biosynthesis of aflatoxins begins with the norsolorinic acid synthase aflC that combines a hexanoyl starter unit produced by the fatty acid synthase aflA/aflB and 7 malonyl-CoA extender units to synthesize the precursor NOR. The second step is the conversion of NOR to averantin and requires the norsolorinic acid ketoreductase aflD, which catalyzes the dehydration of norsolorinic acid to form (1'S)-averantin. The norsolorinic acid reductases aflE and aflF may also play a role in the conversion of NOR to AVN. The cytochrome P450 monooxygenase aflG then catalyzes the hydroxylation of AVN to 5'hydroxyaverantin (HAVN). The next step is performed by the 5'-hydroxyaverantin dehydrogenase aflH that transforms HAVN to 5'-oxoaverantin (OAVN) which is further converted to averufin (AVF) by aflK that plays a dual role in the pathway, as a 5'-oxoaverantin cyclase that mediates conversion of 5'-oxoaverantin, as well as a versicolorin B synthase in a later step in the pathway. The averufin oxidase aflI catalyzes the conversion of AVF to versiconal hemiacetal acetate (VHA). VHA is then the substrate for the versiconal hemiacetal acetate esterase aflJ to yield versiconal (VAL). Versicolorin B synthase aflK then converts VAL to versicolorin B (VERB) by closing the bisfuran ring of aflatoxin which is required for DNA-binding, thus giving to aflatoxin its activity as a mutagen. Then, the activity of the versicolorin B desaturase aflL leads to versicolorin A (VERA). A branch point starts from VERB since it can also be converted to dihydrodemethylsterigmatocystin (DMDHST), probably also by aflL, VERA being a precursor for aflatoxins B1 and G1, and DMDHST for aflatoxins B2 and G2. Next, the versicolorin reductase aflM and the cytochrome P450 monooxygenase aflN are involved in conversion of VERA to demethylsterigmatocystin (DMST). AflX and aflY seem also involved in this step, through probable aflX-mediated epoxide ring-opening step following versicolorin A oxidation and aflY-mediated Baeyer-Villiger oxidation required for the formation of the xanthone ring. The methyltransferase aflO then leads to the modification of DMST to sterigmatocystin (ST), and of DMDHST to dihydrosterigmatocystin (DHST). Both ST and DHST are then substrates of the O-methyltransferase aflP to yield O-methylsterigmatocystin (OMST) and dihydro-O-methylsterigmatocystin (DHOMST), respectively. Finally OMST is converted to aflatoxins B1 and G1, and DHOMST to aflatoxins B2 and G2, via the action of several enzymes including O-methylsterigmatocystin oxidoreductase aflQ, the cytochrome P450 monooxygenase aflU, but also the NADH-dependent flavin oxidoreductase nadA which is specifically required for the synthesis of AFG1 (PubMed:15006741).</text>
</comment>
<comment type="pathway">
    <text evidence="4 8 9">Mycotoxin biosynthesis; aflatoxin biosynthesis.</text>
</comment>
<comment type="induction">
    <text evidence="3">Natural plant compounds carvacrol (CR) and trans-cinnamaldehyde (TC) strongly reduce the expression (PubMed:26217023).</text>
</comment>
<comment type="similarity">
    <text evidence="7">Belongs to the aldo/keto reductase family. Aldo/keto reductase 2 subfamily.</text>
</comment>
<comment type="sequence caution" evidence="7">
    <conflict type="erroneous gene model prediction">
        <sequence resource="EMBL-CDS" id="KJK60773"/>
    </conflict>
</comment>
<feature type="chain" id="PRO_0000070384" description="Norsolorinic acid reductase A">
    <location>
        <begin position="1"/>
        <end position="388"/>
    </location>
</feature>
<feature type="active site" description="Proton donor" evidence="2">
    <location>
        <position position="74"/>
    </location>
</feature>
<feature type="binding site" evidence="1">
    <location>
        <position position="69"/>
    </location>
    <ligand>
        <name>NADP(+)</name>
        <dbReference type="ChEBI" id="CHEBI:58349"/>
    </ligand>
</feature>
<feature type="binding site" evidence="2">
    <location>
        <position position="148"/>
    </location>
    <ligand>
        <name>substrate</name>
    </ligand>
</feature>
<feature type="binding site" evidence="1">
    <location>
        <begin position="178"/>
        <end position="179"/>
    </location>
    <ligand>
        <name>NADP(+)</name>
        <dbReference type="ChEBI" id="CHEBI:58349"/>
    </ligand>
</feature>
<feature type="binding site" evidence="1">
    <location>
        <position position="204"/>
    </location>
    <ligand>
        <name>NADP(+)</name>
        <dbReference type="ChEBI" id="CHEBI:58349"/>
    </ligand>
</feature>
<feature type="binding site" evidence="1">
    <location>
        <begin position="233"/>
        <end position="243"/>
    </location>
    <ligand>
        <name>NADP(+)</name>
        <dbReference type="ChEBI" id="CHEBI:58349"/>
    </ligand>
</feature>
<feature type="binding site" evidence="1">
    <location>
        <begin position="300"/>
        <end position="308"/>
    </location>
    <ligand>
        <name>NADP(+)</name>
        <dbReference type="ChEBI" id="CHEBI:58349"/>
    </ligand>
</feature>
<feature type="sequence conflict" description="In Ref. 3; KJK60773." evidence="7" ref="3">
    <original>S</original>
    <variation>T</variation>
    <location>
        <position position="36"/>
    </location>
</feature>
<feature type="sequence conflict" description="In Ref. 3; KJK60773." evidence="7" ref="3">
    <original>S</original>
    <variation>C</variation>
    <location>
        <position position="209"/>
    </location>
</feature>
<reference key="1">
    <citation type="journal article" date="1996" name="Appl. Environ. Microbiol.">
        <title>Molecular characterization of an Aspergillus parasiticus dehydrogenase gene, norA, located on the aflatoxin biosynthesis gene cluster.</title>
        <authorList>
            <person name="Cary J.W."/>
            <person name="Wright M."/>
            <person name="Bhatnagar D."/>
            <person name="Lee R."/>
            <person name="Chu F."/>
        </authorList>
    </citation>
    <scope>NUCLEOTIDE SEQUENCE [GENOMIC DNA]</scope>
    <scope>FUNCTION</scope>
    <scope>PATHWAY</scope>
    <source>
        <strain>ATCC 56775 / NRRL 5862 / SRRC 143 / SU-1</strain>
    </source>
</reference>
<reference key="2">
    <citation type="journal article" date="2004" name="FEBS Lett.">
        <title>Completed sequence of aflatoxin pathway gene cluster in Aspergillus parasiticus.</title>
        <authorList>
            <person name="Yu J."/>
            <person name="Bhatnagar D."/>
            <person name="Cleveland T.E."/>
        </authorList>
    </citation>
    <scope>NUCLEOTIDE SEQUENCE [GENOMIC DNA]</scope>
    <scope>FUNCTION</scope>
    <scope>PATHWAY</scope>
    <source>
        <strain>ATCC 56775 / NRRL 5862 / SRRC 143 / SU-1</strain>
    </source>
</reference>
<reference key="3">
    <citation type="submission" date="2015-02" db="EMBL/GenBank/DDBJ databases">
        <title>Draft genome sequence of Aspergillus parasiticus SU-1.</title>
        <authorList>
            <person name="Yu J."/>
            <person name="Fedorova N."/>
            <person name="Yin Y."/>
            <person name="Losada L."/>
            <person name="Zafar N."/>
            <person name="Taujale R."/>
            <person name="Ehrlich K.C."/>
            <person name="Bhatnagar D."/>
            <person name="Cleveland T.E."/>
            <person name="Bennett J.W."/>
            <person name="Nierman W.C."/>
        </authorList>
    </citation>
    <scope>NUCLEOTIDE SEQUENCE [LARGE SCALE GENOMIC DNA]</scope>
    <source>
        <strain>ATCC 56775 / NRRL 5862 / SRRC 143 / SU-1</strain>
    </source>
</reference>
<reference key="4">
    <citation type="journal article" date="2004" name="Appl. Environ. Microbiol.">
        <title>Clustered pathway genes in aflatoxin biosynthesis.</title>
        <authorList>
            <person name="Yu J."/>
            <person name="Chang P.K."/>
            <person name="Ehrlich K.C."/>
            <person name="Cary J.W."/>
            <person name="Bhatnagar D."/>
            <person name="Cleveland T.E."/>
            <person name="Payne G.A."/>
            <person name="Linz J.E."/>
            <person name="Woloshuk C.P."/>
            <person name="Bennett J.W."/>
        </authorList>
    </citation>
    <scope>FUNCTION</scope>
    <scope>PATHWAY</scope>
    <scope>NOMENCLATURE</scope>
</reference>
<reference key="5">
    <citation type="journal article" date="2015" name="Poult. Sci.">
        <title>Controlling Aspergillus flavus and Aspergillus parasiticus growth and aflatoxin production in poultry feed using carvacrol and trans-cinnamaldehyde.</title>
        <authorList>
            <person name="Yin H.B."/>
            <person name="Chen C.H."/>
            <person name="Kollanoor-Johny A."/>
            <person name="Darre M.J."/>
            <person name="Venkitanarayanan K."/>
        </authorList>
    </citation>
    <scope>INDUCTION</scope>
</reference>
<name>AFLE_ASPPU</name>
<organism>
    <name type="scientific">Aspergillus parasiticus (strain ATCC 56775 / NRRL 5862 / SRRC 143 / SU-1)</name>
    <dbReference type="NCBI Taxonomy" id="1403190"/>
    <lineage>
        <taxon>Eukaryota</taxon>
        <taxon>Fungi</taxon>
        <taxon>Dikarya</taxon>
        <taxon>Ascomycota</taxon>
        <taxon>Pezizomycotina</taxon>
        <taxon>Eurotiomycetes</taxon>
        <taxon>Eurotiomycetidae</taxon>
        <taxon>Eurotiales</taxon>
        <taxon>Aspergillaceae</taxon>
        <taxon>Aspergillus</taxon>
        <taxon>Aspergillus subgen. Circumdati</taxon>
    </lineage>
</organism>
<evidence type="ECO:0000250" key="1">
    <source>
        <dbReference type="UniProtKB" id="O43488"/>
    </source>
</evidence>
<evidence type="ECO:0000250" key="2">
    <source>
        <dbReference type="UniProtKB" id="Q8CG76"/>
    </source>
</evidence>
<evidence type="ECO:0000269" key="3">
    <source>
    </source>
</evidence>
<evidence type="ECO:0000269" key="4">
    <source>
    </source>
</evidence>
<evidence type="ECO:0000303" key="5">
    <source>
    </source>
</evidence>
<evidence type="ECO:0000303" key="6">
    <source>
    </source>
</evidence>
<evidence type="ECO:0000305" key="7"/>
<evidence type="ECO:0000305" key="8">
    <source>
    </source>
</evidence>
<evidence type="ECO:0000305" key="9">
    <source>
    </source>
</evidence>
<evidence type="ECO:0000305" key="10">
    <source>
    </source>
</evidence>
<sequence length="388" mass="43721">MVLPTAPEPPTLLGYHRILSPSAGVRVSPLCLGTMSFGNGWKGVMGECDQATSFNMLDTFYESGGNFIDVANFYQGGDTERWVGEWMAQRQNRDEIVLSTKYTMGYTMFGPQKIKSNFQGNHAKSLRLSVKASLQKLQTDYIDLLYVHMWDFTTSVEEVMRSLNHLVANGKVLYLGVSDTPAWLVVKCNAFARANGLTPFSVYQGHWSSAFRDFERDILPMCESEGMGLAPWGVLGRGQFRSAEEFSREGRKMGPQDEKHRRLGEKLDQMAQQKNTKATSIAQAYVMHKAPYVFPVIGGRKVEHLKENIEALGLVLSEEEIREIDDAEPFDVGFPMNFLFETPTQSYRTNMTSKDIWQLSCNTRLETVPKQQPIEPLQGAKYFGSASK</sequence>
<keyword id="KW-0521">NADP</keyword>
<keyword id="KW-0560">Oxidoreductase</keyword>
<keyword id="KW-1185">Reference proteome</keyword>